<comment type="function">
    <text evidence="1">Participates actively in the response to hyperosmotic and heat shock by preventing the aggregation of stress-denatured proteins and by disaggregating proteins, also in an autonomous, DnaK-independent fashion. Unfolded proteins bind initially to DnaJ; upon interaction with the DnaJ-bound protein, DnaK hydrolyzes its bound ATP, resulting in the formation of a stable complex. GrpE releases ADP from DnaK; ATP binding to DnaK triggers the release of the substrate protein, thus completing the reaction cycle. Several rounds of ATP-dependent interactions between DnaJ, DnaK and GrpE are required for fully efficient folding. Also involved, together with DnaK and GrpE, in the DNA replication of plasmids through activation of initiation proteins.</text>
</comment>
<comment type="cofactor">
    <cofactor evidence="1">
        <name>Zn(2+)</name>
        <dbReference type="ChEBI" id="CHEBI:29105"/>
    </cofactor>
    <text evidence="1">Binds 2 Zn(2+) ions per monomer.</text>
</comment>
<comment type="subunit">
    <text evidence="1">Homodimer.</text>
</comment>
<comment type="subcellular location">
    <subcellularLocation>
        <location evidence="1">Cytoplasm</location>
    </subcellularLocation>
</comment>
<comment type="domain">
    <text evidence="1">The J domain is necessary and sufficient to stimulate DnaK ATPase activity. Zinc center 1 plays an important role in the autonomous, DnaK-independent chaperone activity of DnaJ. Zinc center 2 is essential for interaction with DnaK and for DnaJ activity.</text>
</comment>
<comment type="similarity">
    <text evidence="1">Belongs to the DnaJ family.</text>
</comment>
<reference key="1">
    <citation type="journal article" date="2005" name="Nat. Biotechnol.">
        <title>The complete genome sequence of the meat-borne lactic acid bacterium Lactobacillus sakei 23K.</title>
        <authorList>
            <person name="Chaillou S."/>
            <person name="Champomier-Verges M.-C."/>
            <person name="Cornet M."/>
            <person name="Crutz-Le Coq A.-M."/>
            <person name="Dudez A.-M."/>
            <person name="Martin V."/>
            <person name="Beaufils S."/>
            <person name="Darbon-Rongere E."/>
            <person name="Bossy R."/>
            <person name="Loux V."/>
            <person name="Zagorec M."/>
        </authorList>
    </citation>
    <scope>NUCLEOTIDE SEQUENCE [LARGE SCALE GENOMIC DNA]</scope>
    <source>
        <strain>23K</strain>
    </source>
</reference>
<dbReference type="EMBL" id="CR936503">
    <property type="protein sequence ID" value="CAI55539.1"/>
    <property type="molecule type" value="Genomic_DNA"/>
</dbReference>
<dbReference type="RefSeq" id="WP_011374932.1">
    <property type="nucleotide sequence ID" value="NC_007576.1"/>
</dbReference>
<dbReference type="SMR" id="Q38W94"/>
<dbReference type="STRING" id="314315.LCA_1235"/>
<dbReference type="KEGG" id="lsa:LCA_1235"/>
<dbReference type="eggNOG" id="COG0484">
    <property type="taxonomic scope" value="Bacteria"/>
</dbReference>
<dbReference type="HOGENOM" id="CLU_017633_0_7_9"/>
<dbReference type="OrthoDB" id="9779889at2"/>
<dbReference type="Proteomes" id="UP000002707">
    <property type="component" value="Chromosome"/>
</dbReference>
<dbReference type="GO" id="GO:0005737">
    <property type="term" value="C:cytoplasm"/>
    <property type="evidence" value="ECO:0007669"/>
    <property type="project" value="UniProtKB-SubCell"/>
</dbReference>
<dbReference type="GO" id="GO:0005524">
    <property type="term" value="F:ATP binding"/>
    <property type="evidence" value="ECO:0007669"/>
    <property type="project" value="InterPro"/>
</dbReference>
<dbReference type="GO" id="GO:0031072">
    <property type="term" value="F:heat shock protein binding"/>
    <property type="evidence" value="ECO:0007669"/>
    <property type="project" value="InterPro"/>
</dbReference>
<dbReference type="GO" id="GO:0051082">
    <property type="term" value="F:unfolded protein binding"/>
    <property type="evidence" value="ECO:0007669"/>
    <property type="project" value="UniProtKB-UniRule"/>
</dbReference>
<dbReference type="GO" id="GO:0008270">
    <property type="term" value="F:zinc ion binding"/>
    <property type="evidence" value="ECO:0007669"/>
    <property type="project" value="UniProtKB-UniRule"/>
</dbReference>
<dbReference type="GO" id="GO:0051085">
    <property type="term" value="P:chaperone cofactor-dependent protein refolding"/>
    <property type="evidence" value="ECO:0007669"/>
    <property type="project" value="TreeGrafter"/>
</dbReference>
<dbReference type="GO" id="GO:0006260">
    <property type="term" value="P:DNA replication"/>
    <property type="evidence" value="ECO:0007669"/>
    <property type="project" value="UniProtKB-KW"/>
</dbReference>
<dbReference type="GO" id="GO:0042026">
    <property type="term" value="P:protein refolding"/>
    <property type="evidence" value="ECO:0007669"/>
    <property type="project" value="TreeGrafter"/>
</dbReference>
<dbReference type="GO" id="GO:0009408">
    <property type="term" value="P:response to heat"/>
    <property type="evidence" value="ECO:0007669"/>
    <property type="project" value="InterPro"/>
</dbReference>
<dbReference type="CDD" id="cd06257">
    <property type="entry name" value="DnaJ"/>
    <property type="match status" value="1"/>
</dbReference>
<dbReference type="CDD" id="cd10747">
    <property type="entry name" value="DnaJ_C"/>
    <property type="match status" value="1"/>
</dbReference>
<dbReference type="CDD" id="cd10719">
    <property type="entry name" value="DnaJ_zf"/>
    <property type="match status" value="1"/>
</dbReference>
<dbReference type="FunFam" id="1.10.287.110:FF:000031">
    <property type="entry name" value="Molecular chaperone DnaJ"/>
    <property type="match status" value="1"/>
</dbReference>
<dbReference type="FunFam" id="2.10.230.10:FF:000002">
    <property type="entry name" value="Molecular chaperone DnaJ"/>
    <property type="match status" value="1"/>
</dbReference>
<dbReference type="FunFam" id="2.60.260.20:FF:000004">
    <property type="entry name" value="Molecular chaperone DnaJ"/>
    <property type="match status" value="1"/>
</dbReference>
<dbReference type="Gene3D" id="1.10.287.110">
    <property type="entry name" value="DnaJ domain"/>
    <property type="match status" value="1"/>
</dbReference>
<dbReference type="Gene3D" id="2.10.230.10">
    <property type="entry name" value="Heat shock protein DnaJ, cysteine-rich domain"/>
    <property type="match status" value="1"/>
</dbReference>
<dbReference type="Gene3D" id="2.60.260.20">
    <property type="entry name" value="Urease metallochaperone UreE, N-terminal domain"/>
    <property type="match status" value="2"/>
</dbReference>
<dbReference type="HAMAP" id="MF_01152">
    <property type="entry name" value="DnaJ"/>
    <property type="match status" value="1"/>
</dbReference>
<dbReference type="InterPro" id="IPR012724">
    <property type="entry name" value="DnaJ"/>
</dbReference>
<dbReference type="InterPro" id="IPR002939">
    <property type="entry name" value="DnaJ_C"/>
</dbReference>
<dbReference type="InterPro" id="IPR001623">
    <property type="entry name" value="DnaJ_domain"/>
</dbReference>
<dbReference type="InterPro" id="IPR018253">
    <property type="entry name" value="DnaJ_domain_CS"/>
</dbReference>
<dbReference type="InterPro" id="IPR008971">
    <property type="entry name" value="HSP40/DnaJ_pept-bd"/>
</dbReference>
<dbReference type="InterPro" id="IPR001305">
    <property type="entry name" value="HSP_DnaJ_Cys-rich_dom"/>
</dbReference>
<dbReference type="InterPro" id="IPR036410">
    <property type="entry name" value="HSP_DnaJ_Cys-rich_dom_sf"/>
</dbReference>
<dbReference type="InterPro" id="IPR036869">
    <property type="entry name" value="J_dom_sf"/>
</dbReference>
<dbReference type="NCBIfam" id="TIGR02349">
    <property type="entry name" value="DnaJ_bact"/>
    <property type="match status" value="1"/>
</dbReference>
<dbReference type="NCBIfam" id="NF008035">
    <property type="entry name" value="PRK10767.1"/>
    <property type="match status" value="1"/>
</dbReference>
<dbReference type="NCBIfam" id="NF010869">
    <property type="entry name" value="PRK14276.1"/>
    <property type="match status" value="1"/>
</dbReference>
<dbReference type="NCBIfam" id="NF010873">
    <property type="entry name" value="PRK14280.1"/>
    <property type="match status" value="1"/>
</dbReference>
<dbReference type="PANTHER" id="PTHR43096:SF48">
    <property type="entry name" value="CHAPERONE PROTEIN DNAJ"/>
    <property type="match status" value="1"/>
</dbReference>
<dbReference type="PANTHER" id="PTHR43096">
    <property type="entry name" value="DNAJ HOMOLOG 1, MITOCHONDRIAL-RELATED"/>
    <property type="match status" value="1"/>
</dbReference>
<dbReference type="Pfam" id="PF00226">
    <property type="entry name" value="DnaJ"/>
    <property type="match status" value="1"/>
</dbReference>
<dbReference type="Pfam" id="PF01556">
    <property type="entry name" value="DnaJ_C"/>
    <property type="match status" value="1"/>
</dbReference>
<dbReference type="Pfam" id="PF00684">
    <property type="entry name" value="DnaJ_CXXCXGXG"/>
    <property type="match status" value="1"/>
</dbReference>
<dbReference type="PRINTS" id="PR00625">
    <property type="entry name" value="JDOMAIN"/>
</dbReference>
<dbReference type="SMART" id="SM00271">
    <property type="entry name" value="DnaJ"/>
    <property type="match status" value="1"/>
</dbReference>
<dbReference type="SUPFAM" id="SSF46565">
    <property type="entry name" value="Chaperone J-domain"/>
    <property type="match status" value="1"/>
</dbReference>
<dbReference type="SUPFAM" id="SSF57938">
    <property type="entry name" value="DnaJ/Hsp40 cysteine-rich domain"/>
    <property type="match status" value="1"/>
</dbReference>
<dbReference type="SUPFAM" id="SSF49493">
    <property type="entry name" value="HSP40/DnaJ peptide-binding domain"/>
    <property type="match status" value="2"/>
</dbReference>
<dbReference type="PROSITE" id="PS00636">
    <property type="entry name" value="DNAJ_1"/>
    <property type="match status" value="1"/>
</dbReference>
<dbReference type="PROSITE" id="PS50076">
    <property type="entry name" value="DNAJ_2"/>
    <property type="match status" value="1"/>
</dbReference>
<dbReference type="PROSITE" id="PS51188">
    <property type="entry name" value="ZF_CR"/>
    <property type="match status" value="1"/>
</dbReference>
<keyword id="KW-0143">Chaperone</keyword>
<keyword id="KW-0963">Cytoplasm</keyword>
<keyword id="KW-0235">DNA replication</keyword>
<keyword id="KW-0479">Metal-binding</keyword>
<keyword id="KW-1185">Reference proteome</keyword>
<keyword id="KW-0677">Repeat</keyword>
<keyword id="KW-0346">Stress response</keyword>
<keyword id="KW-0862">Zinc</keyword>
<keyword id="KW-0863">Zinc-finger</keyword>
<accession>Q38W94</accession>
<name>DNAJ_LATSS</name>
<gene>
    <name evidence="1" type="primary">dnaJ</name>
    <name type="ordered locus">LCA_1235</name>
</gene>
<proteinExistence type="inferred from homology"/>
<organism>
    <name type="scientific">Latilactobacillus sakei subsp. sakei (strain 23K)</name>
    <name type="common">Lactobacillus sakei subsp. sakei</name>
    <dbReference type="NCBI Taxonomy" id="314315"/>
    <lineage>
        <taxon>Bacteria</taxon>
        <taxon>Bacillati</taxon>
        <taxon>Bacillota</taxon>
        <taxon>Bacilli</taxon>
        <taxon>Lactobacillales</taxon>
        <taxon>Lactobacillaceae</taxon>
        <taxon>Latilactobacillus</taxon>
    </lineage>
</organism>
<feature type="chain" id="PRO_1000085217" description="Chaperone protein DnaJ">
    <location>
        <begin position="1"/>
        <end position="383"/>
    </location>
</feature>
<feature type="domain" description="J" evidence="1">
    <location>
        <begin position="6"/>
        <end position="70"/>
    </location>
</feature>
<feature type="repeat" description="CXXCXGXG motif">
    <location>
        <begin position="153"/>
        <end position="160"/>
    </location>
</feature>
<feature type="repeat" description="CXXCXGXG motif">
    <location>
        <begin position="170"/>
        <end position="177"/>
    </location>
</feature>
<feature type="repeat" description="CXXCXGXG motif">
    <location>
        <begin position="196"/>
        <end position="203"/>
    </location>
</feature>
<feature type="repeat" description="CXXCXGXG motif">
    <location>
        <begin position="210"/>
        <end position="217"/>
    </location>
</feature>
<feature type="zinc finger region" description="CR-type" evidence="1">
    <location>
        <begin position="140"/>
        <end position="222"/>
    </location>
</feature>
<feature type="binding site" evidence="1">
    <location>
        <position position="153"/>
    </location>
    <ligand>
        <name>Zn(2+)</name>
        <dbReference type="ChEBI" id="CHEBI:29105"/>
        <label>1</label>
    </ligand>
</feature>
<feature type="binding site" evidence="1">
    <location>
        <position position="156"/>
    </location>
    <ligand>
        <name>Zn(2+)</name>
        <dbReference type="ChEBI" id="CHEBI:29105"/>
        <label>1</label>
    </ligand>
</feature>
<feature type="binding site" evidence="1">
    <location>
        <position position="170"/>
    </location>
    <ligand>
        <name>Zn(2+)</name>
        <dbReference type="ChEBI" id="CHEBI:29105"/>
        <label>2</label>
    </ligand>
</feature>
<feature type="binding site" evidence="1">
    <location>
        <position position="173"/>
    </location>
    <ligand>
        <name>Zn(2+)</name>
        <dbReference type="ChEBI" id="CHEBI:29105"/>
        <label>2</label>
    </ligand>
</feature>
<feature type="binding site" evidence="1">
    <location>
        <position position="196"/>
    </location>
    <ligand>
        <name>Zn(2+)</name>
        <dbReference type="ChEBI" id="CHEBI:29105"/>
        <label>2</label>
    </ligand>
</feature>
<feature type="binding site" evidence="1">
    <location>
        <position position="199"/>
    </location>
    <ligand>
        <name>Zn(2+)</name>
        <dbReference type="ChEBI" id="CHEBI:29105"/>
        <label>2</label>
    </ligand>
</feature>
<feature type="binding site" evidence="1">
    <location>
        <position position="210"/>
    </location>
    <ligand>
        <name>Zn(2+)</name>
        <dbReference type="ChEBI" id="CHEBI:29105"/>
        <label>1</label>
    </ligand>
</feature>
<feature type="binding site" evidence="1">
    <location>
        <position position="213"/>
    </location>
    <ligand>
        <name>Zn(2+)</name>
        <dbReference type="ChEBI" id="CHEBI:29105"/>
        <label>1</label>
    </ligand>
</feature>
<protein>
    <recommendedName>
        <fullName evidence="1">Chaperone protein DnaJ</fullName>
    </recommendedName>
</protein>
<sequence length="383" mass="41131">MAEKRDYYDVLGVGRDASDDEIKKAYRKLSKKYHPDINKAPDAEAKFKEVTEAYEALSDPQKRAAYDQYGHAGMNGGFGGGAGAGQGFGGFGGGAEGFGGFDDIFSSFFGGGARQQPNGPRQGSDLQYRMDLKFEEAVFGKETKISYSREAECHTCHGSGAKPGTSAETCHKCHGAGQIQVERQTPLGRMMSRETCDVCGGTGKEIKSKCDTCHGTGREEERHTVKVKVPAGVEDGQQMRLQGQGEAGSNGGPYGDLFIVFRVAPSDEFERDGAQIFVEVPISFVQAALGDEIEVNTVHGPVKLKIPAGTQTNTVFRLRGKGAPKLHGTGNGDQNVTVNVVTPKTLNSKQRDALKAFAVASGDSVNPQDSNLFDKILNKKYKK</sequence>
<evidence type="ECO:0000255" key="1">
    <source>
        <dbReference type="HAMAP-Rule" id="MF_01152"/>
    </source>
</evidence>